<feature type="chain" id="PRO_0000329803" description="Polyribonucleotide nucleotidyltransferase">
    <location>
        <begin position="1"/>
        <end position="716"/>
    </location>
</feature>
<feature type="domain" description="KH" evidence="1">
    <location>
        <begin position="556"/>
        <end position="615"/>
    </location>
</feature>
<feature type="domain" description="S1 motif" evidence="1">
    <location>
        <begin position="625"/>
        <end position="693"/>
    </location>
</feature>
<feature type="region of interest" description="Disordered" evidence="2">
    <location>
        <begin position="695"/>
        <end position="716"/>
    </location>
</feature>
<feature type="compositionally biased region" description="Basic and acidic residues" evidence="2">
    <location>
        <begin position="704"/>
        <end position="716"/>
    </location>
</feature>
<feature type="binding site" evidence="1">
    <location>
        <position position="490"/>
    </location>
    <ligand>
        <name>Mg(2+)</name>
        <dbReference type="ChEBI" id="CHEBI:18420"/>
    </ligand>
</feature>
<feature type="binding site" evidence="1">
    <location>
        <position position="496"/>
    </location>
    <ligand>
        <name>Mg(2+)</name>
        <dbReference type="ChEBI" id="CHEBI:18420"/>
    </ligand>
</feature>
<gene>
    <name evidence="1" type="primary">pnp</name>
    <name type="ordered locus">RHOS4_27290</name>
    <name type="ORF">RSP_1112</name>
</gene>
<name>PNP_CERS4</name>
<evidence type="ECO:0000255" key="1">
    <source>
        <dbReference type="HAMAP-Rule" id="MF_01595"/>
    </source>
</evidence>
<evidence type="ECO:0000256" key="2">
    <source>
        <dbReference type="SAM" id="MobiDB-lite"/>
    </source>
</evidence>
<reference key="1">
    <citation type="submission" date="2005-09" db="EMBL/GenBank/DDBJ databases">
        <title>Complete sequence of chromosome 1 of Rhodobacter sphaeroides 2.4.1.</title>
        <authorList>
            <person name="Copeland A."/>
            <person name="Lucas S."/>
            <person name="Lapidus A."/>
            <person name="Barry K."/>
            <person name="Detter J.C."/>
            <person name="Glavina T."/>
            <person name="Hammon N."/>
            <person name="Israni S."/>
            <person name="Pitluck S."/>
            <person name="Richardson P."/>
            <person name="Mackenzie C."/>
            <person name="Choudhary M."/>
            <person name="Larimer F."/>
            <person name="Hauser L.J."/>
            <person name="Land M."/>
            <person name="Donohue T.J."/>
            <person name="Kaplan S."/>
        </authorList>
    </citation>
    <scope>NUCLEOTIDE SEQUENCE [LARGE SCALE GENOMIC DNA]</scope>
    <source>
        <strain>ATCC 17023 / DSM 158 / JCM 6121 / CCUG 31486 / LMG 2827 / NBRC 12203 / NCIMB 8253 / ATH 2.4.1.</strain>
    </source>
</reference>
<accession>Q3IYT7</accession>
<organism>
    <name type="scientific">Cereibacter sphaeroides (strain ATCC 17023 / DSM 158 / JCM 6121 / CCUG 31486 / LMG 2827 / NBRC 12203 / NCIMB 8253 / ATH 2.4.1.)</name>
    <name type="common">Rhodobacter sphaeroides</name>
    <dbReference type="NCBI Taxonomy" id="272943"/>
    <lineage>
        <taxon>Bacteria</taxon>
        <taxon>Pseudomonadati</taxon>
        <taxon>Pseudomonadota</taxon>
        <taxon>Alphaproteobacteria</taxon>
        <taxon>Rhodobacterales</taxon>
        <taxon>Paracoccaceae</taxon>
        <taxon>Cereibacter</taxon>
    </lineage>
</organism>
<sequence>MFNVTKKSIEWGGETLTLETGKVARQADGSVIATLGETSVMANVTFAKAAKPGQDFFPLTVHYQERYYAAGKVPGGFFKREARPSEKETLTSRLIDRPIRPLFVDGFKNEVLLIVTVLSHDLVNEPDIVAMIAASAALTISGVPFMGPIGAARVGFAGGEYVLNPDVDDMQKLRENPEQRLDLVIAGTKDAVMMVESEAYELSEAEMLGAVKFGHEAMQPVIDMIIDFAEEAAHEPFDFSPPDYAALYAKVKSLGETQMRAAFAIREKQDRVNAIDAARAAIKAQLSEAELADENLGTAFKKLESSILRGDIINGGARIDGRDTKTVRPIISETSVLPRTHGSALFTRGETQALVVTTLGTGEDEQIIDALHGNSRSNFLLHYNFPPYSVGEVGRFGPPGRREIGHGKLAWRALQAVLPAATDFPYTIRVVSEITESNGSSSMASVCGGSLSMMDAGVPLKAPVAGVAMGLILEDDGKWAVLTDILGDEDHLGDMDFKVAGTENGITSLQMDIKVAGITPEIMEQALAQAKDGRMHILGEMSKALSSANSFSAYAPKIETLTIPTDKIREVIGSGGKVIREIVETSGAKVDINDDGVIKIASNDQAAIKKAYDMIWSIVAEPEEGQIYTGKVVKLVDFGAFVNFFGKRDGLVHVSQIANKRLTHPNEVLKEGQEVKVKLLGFDERGKVRLGMKMVDQETGQEIQPEKKEKEEAGEA</sequence>
<dbReference type="EC" id="2.7.7.8" evidence="1"/>
<dbReference type="EMBL" id="CP000143">
    <property type="protein sequence ID" value="ABA80297.1"/>
    <property type="molecule type" value="Genomic_DNA"/>
</dbReference>
<dbReference type="RefSeq" id="WP_002721512.1">
    <property type="nucleotide sequence ID" value="NZ_CP030271.1"/>
</dbReference>
<dbReference type="RefSeq" id="YP_354198.1">
    <property type="nucleotide sequence ID" value="NC_007493.2"/>
</dbReference>
<dbReference type="SMR" id="Q3IYT7"/>
<dbReference type="STRING" id="272943.RSP_1112"/>
<dbReference type="EnsemblBacteria" id="ABA80297">
    <property type="protein sequence ID" value="ABA80297"/>
    <property type="gene ID" value="RSP_1112"/>
</dbReference>
<dbReference type="GeneID" id="3720696"/>
<dbReference type="KEGG" id="rsp:RSP_1112"/>
<dbReference type="PATRIC" id="fig|272943.9.peg.3090"/>
<dbReference type="eggNOG" id="COG1185">
    <property type="taxonomic scope" value="Bacteria"/>
</dbReference>
<dbReference type="OrthoDB" id="9804305at2"/>
<dbReference type="PhylomeDB" id="Q3IYT7"/>
<dbReference type="Proteomes" id="UP000002703">
    <property type="component" value="Chromosome 1"/>
</dbReference>
<dbReference type="GO" id="GO:0005829">
    <property type="term" value="C:cytosol"/>
    <property type="evidence" value="ECO:0007669"/>
    <property type="project" value="TreeGrafter"/>
</dbReference>
<dbReference type="GO" id="GO:0000175">
    <property type="term" value="F:3'-5'-RNA exonuclease activity"/>
    <property type="evidence" value="ECO:0007669"/>
    <property type="project" value="TreeGrafter"/>
</dbReference>
<dbReference type="GO" id="GO:0000287">
    <property type="term" value="F:magnesium ion binding"/>
    <property type="evidence" value="ECO:0007669"/>
    <property type="project" value="UniProtKB-UniRule"/>
</dbReference>
<dbReference type="GO" id="GO:0004654">
    <property type="term" value="F:polyribonucleotide nucleotidyltransferase activity"/>
    <property type="evidence" value="ECO:0007669"/>
    <property type="project" value="UniProtKB-UniRule"/>
</dbReference>
<dbReference type="GO" id="GO:0003723">
    <property type="term" value="F:RNA binding"/>
    <property type="evidence" value="ECO:0007669"/>
    <property type="project" value="UniProtKB-UniRule"/>
</dbReference>
<dbReference type="GO" id="GO:0006402">
    <property type="term" value="P:mRNA catabolic process"/>
    <property type="evidence" value="ECO:0007669"/>
    <property type="project" value="UniProtKB-UniRule"/>
</dbReference>
<dbReference type="GO" id="GO:0006396">
    <property type="term" value="P:RNA processing"/>
    <property type="evidence" value="ECO:0007669"/>
    <property type="project" value="InterPro"/>
</dbReference>
<dbReference type="CDD" id="cd02393">
    <property type="entry name" value="KH-I_PNPase"/>
    <property type="match status" value="1"/>
</dbReference>
<dbReference type="CDD" id="cd11363">
    <property type="entry name" value="RNase_PH_PNPase_1"/>
    <property type="match status" value="1"/>
</dbReference>
<dbReference type="CDD" id="cd11364">
    <property type="entry name" value="RNase_PH_PNPase_2"/>
    <property type="match status" value="1"/>
</dbReference>
<dbReference type="CDD" id="cd04472">
    <property type="entry name" value="S1_PNPase"/>
    <property type="match status" value="1"/>
</dbReference>
<dbReference type="FunFam" id="2.40.50.140:FF:000107">
    <property type="entry name" value="Polyribonucleotide nucleotidyltransferase"/>
    <property type="match status" value="1"/>
</dbReference>
<dbReference type="FunFam" id="3.30.1370.10:FF:000001">
    <property type="entry name" value="Polyribonucleotide nucleotidyltransferase"/>
    <property type="match status" value="1"/>
</dbReference>
<dbReference type="FunFam" id="3.30.230.70:FF:000001">
    <property type="entry name" value="Polyribonucleotide nucleotidyltransferase"/>
    <property type="match status" value="1"/>
</dbReference>
<dbReference type="FunFam" id="3.30.230.70:FF:000002">
    <property type="entry name" value="Polyribonucleotide nucleotidyltransferase"/>
    <property type="match status" value="1"/>
</dbReference>
<dbReference type="Gene3D" id="3.30.230.70">
    <property type="entry name" value="GHMP Kinase, N-terminal domain"/>
    <property type="match status" value="2"/>
</dbReference>
<dbReference type="Gene3D" id="3.30.1370.10">
    <property type="entry name" value="K Homology domain, type 1"/>
    <property type="match status" value="1"/>
</dbReference>
<dbReference type="Gene3D" id="2.40.50.140">
    <property type="entry name" value="Nucleic acid-binding proteins"/>
    <property type="match status" value="1"/>
</dbReference>
<dbReference type="HAMAP" id="MF_01595">
    <property type="entry name" value="PNPase"/>
    <property type="match status" value="1"/>
</dbReference>
<dbReference type="InterPro" id="IPR001247">
    <property type="entry name" value="ExoRNase_PH_dom1"/>
</dbReference>
<dbReference type="InterPro" id="IPR015847">
    <property type="entry name" value="ExoRNase_PH_dom2"/>
</dbReference>
<dbReference type="InterPro" id="IPR036345">
    <property type="entry name" value="ExoRNase_PH_dom2_sf"/>
</dbReference>
<dbReference type="InterPro" id="IPR004087">
    <property type="entry name" value="KH_dom"/>
</dbReference>
<dbReference type="InterPro" id="IPR004088">
    <property type="entry name" value="KH_dom_type_1"/>
</dbReference>
<dbReference type="InterPro" id="IPR036612">
    <property type="entry name" value="KH_dom_type_1_sf"/>
</dbReference>
<dbReference type="InterPro" id="IPR012340">
    <property type="entry name" value="NA-bd_OB-fold"/>
</dbReference>
<dbReference type="InterPro" id="IPR012162">
    <property type="entry name" value="PNPase"/>
</dbReference>
<dbReference type="InterPro" id="IPR027408">
    <property type="entry name" value="PNPase/RNase_PH_dom_sf"/>
</dbReference>
<dbReference type="InterPro" id="IPR015848">
    <property type="entry name" value="PNPase_PH_RNA-bd_bac/org-type"/>
</dbReference>
<dbReference type="InterPro" id="IPR036456">
    <property type="entry name" value="PNPase_PH_RNA-bd_sf"/>
</dbReference>
<dbReference type="InterPro" id="IPR020568">
    <property type="entry name" value="Ribosomal_Su5_D2-typ_SF"/>
</dbReference>
<dbReference type="InterPro" id="IPR003029">
    <property type="entry name" value="S1_domain"/>
</dbReference>
<dbReference type="NCBIfam" id="TIGR03591">
    <property type="entry name" value="polynuc_phos"/>
    <property type="match status" value="1"/>
</dbReference>
<dbReference type="NCBIfam" id="NF008805">
    <property type="entry name" value="PRK11824.1"/>
    <property type="match status" value="1"/>
</dbReference>
<dbReference type="PANTHER" id="PTHR11252">
    <property type="entry name" value="POLYRIBONUCLEOTIDE NUCLEOTIDYLTRANSFERASE"/>
    <property type="match status" value="1"/>
</dbReference>
<dbReference type="PANTHER" id="PTHR11252:SF0">
    <property type="entry name" value="POLYRIBONUCLEOTIDE NUCLEOTIDYLTRANSFERASE 1, MITOCHONDRIAL"/>
    <property type="match status" value="1"/>
</dbReference>
<dbReference type="Pfam" id="PF00013">
    <property type="entry name" value="KH_1"/>
    <property type="match status" value="1"/>
</dbReference>
<dbReference type="Pfam" id="PF03726">
    <property type="entry name" value="PNPase"/>
    <property type="match status" value="1"/>
</dbReference>
<dbReference type="Pfam" id="PF01138">
    <property type="entry name" value="RNase_PH"/>
    <property type="match status" value="2"/>
</dbReference>
<dbReference type="Pfam" id="PF03725">
    <property type="entry name" value="RNase_PH_C"/>
    <property type="match status" value="2"/>
</dbReference>
<dbReference type="Pfam" id="PF00575">
    <property type="entry name" value="S1"/>
    <property type="match status" value="1"/>
</dbReference>
<dbReference type="PIRSF" id="PIRSF005499">
    <property type="entry name" value="PNPase"/>
    <property type="match status" value="1"/>
</dbReference>
<dbReference type="SMART" id="SM00322">
    <property type="entry name" value="KH"/>
    <property type="match status" value="1"/>
</dbReference>
<dbReference type="SMART" id="SM00316">
    <property type="entry name" value="S1"/>
    <property type="match status" value="1"/>
</dbReference>
<dbReference type="SUPFAM" id="SSF54791">
    <property type="entry name" value="Eukaryotic type KH-domain (KH-domain type I)"/>
    <property type="match status" value="1"/>
</dbReference>
<dbReference type="SUPFAM" id="SSF50249">
    <property type="entry name" value="Nucleic acid-binding proteins"/>
    <property type="match status" value="1"/>
</dbReference>
<dbReference type="SUPFAM" id="SSF46915">
    <property type="entry name" value="Polynucleotide phosphorylase/guanosine pentaphosphate synthase (PNPase/GPSI), domain 3"/>
    <property type="match status" value="1"/>
</dbReference>
<dbReference type="SUPFAM" id="SSF55666">
    <property type="entry name" value="Ribonuclease PH domain 2-like"/>
    <property type="match status" value="2"/>
</dbReference>
<dbReference type="SUPFAM" id="SSF54211">
    <property type="entry name" value="Ribosomal protein S5 domain 2-like"/>
    <property type="match status" value="2"/>
</dbReference>
<dbReference type="PROSITE" id="PS50084">
    <property type="entry name" value="KH_TYPE_1"/>
    <property type="match status" value="1"/>
</dbReference>
<dbReference type="PROSITE" id="PS50126">
    <property type="entry name" value="S1"/>
    <property type="match status" value="1"/>
</dbReference>
<comment type="function">
    <text evidence="1">Involved in mRNA degradation. Catalyzes the phosphorolysis of single-stranded polyribonucleotides processively in the 3'- to 5'-direction.</text>
</comment>
<comment type="catalytic activity">
    <reaction evidence="1">
        <text>RNA(n+1) + phosphate = RNA(n) + a ribonucleoside 5'-diphosphate</text>
        <dbReference type="Rhea" id="RHEA:22096"/>
        <dbReference type="Rhea" id="RHEA-COMP:14527"/>
        <dbReference type="Rhea" id="RHEA-COMP:17342"/>
        <dbReference type="ChEBI" id="CHEBI:43474"/>
        <dbReference type="ChEBI" id="CHEBI:57930"/>
        <dbReference type="ChEBI" id="CHEBI:140395"/>
        <dbReference type="EC" id="2.7.7.8"/>
    </reaction>
</comment>
<comment type="cofactor">
    <cofactor evidence="1">
        <name>Mg(2+)</name>
        <dbReference type="ChEBI" id="CHEBI:18420"/>
    </cofactor>
</comment>
<comment type="subcellular location">
    <subcellularLocation>
        <location evidence="1">Cytoplasm</location>
    </subcellularLocation>
</comment>
<comment type="similarity">
    <text evidence="1">Belongs to the polyribonucleotide nucleotidyltransferase family.</text>
</comment>
<protein>
    <recommendedName>
        <fullName evidence="1">Polyribonucleotide nucleotidyltransferase</fullName>
        <ecNumber evidence="1">2.7.7.8</ecNumber>
    </recommendedName>
    <alternativeName>
        <fullName evidence="1">Polynucleotide phosphorylase</fullName>
        <shortName evidence="1">PNPase</shortName>
    </alternativeName>
</protein>
<keyword id="KW-0963">Cytoplasm</keyword>
<keyword id="KW-0460">Magnesium</keyword>
<keyword id="KW-0479">Metal-binding</keyword>
<keyword id="KW-0548">Nucleotidyltransferase</keyword>
<keyword id="KW-1185">Reference proteome</keyword>
<keyword id="KW-0694">RNA-binding</keyword>
<keyword id="KW-0808">Transferase</keyword>
<proteinExistence type="inferred from homology"/>